<protein>
    <recommendedName>
        <fullName>Proenkephalin-A</fullName>
    </recommendedName>
    <component>
        <recommendedName>
            <fullName>Synenkephalin</fullName>
        </recommendedName>
    </component>
    <component>
        <recommendedName>
            <fullName>Met-enkephalin</fullName>
        </recommendedName>
    </component>
    <component>
        <recommendedName>
            <fullName>Leu-enkephalin</fullName>
        </recommendedName>
    </component>
</protein>
<feature type="peptide" id="PRO_0000008232" description="Synenkephalin">
    <location>
        <begin position="1" status="less than"/>
        <end position="34"/>
    </location>
</feature>
<feature type="peptide" id="PRO_0000008233" description="Met-enkephalin">
    <location>
        <begin position="38"/>
        <end position="42"/>
    </location>
</feature>
<feature type="peptide" id="PRO_0000008234" description="Met-enkephalin">
    <location>
        <begin position="45"/>
        <end position="49"/>
    </location>
</feature>
<feature type="propeptide" id="PRO_0000008235">
    <location>
        <begin position="52"/>
        <end position="70"/>
    </location>
</feature>
<feature type="peptide" id="PRO_0000008236" description="Met-enkephalin">
    <location>
        <begin position="73"/>
        <end position="77"/>
    </location>
</feature>
<feature type="propeptide" id="PRO_0000008237">
    <location>
        <begin position="80"/>
        <end position="143"/>
    </location>
</feature>
<feature type="peptide" id="PRO_0000008238" description="Met-enkephalin">
    <location>
        <begin position="146"/>
        <end position="150"/>
    </location>
</feature>
<feature type="propeptide" id="PRO_0000008239">
    <location>
        <begin position="153"/>
        <end position="163"/>
    </location>
</feature>
<feature type="peptide" id="PRO_0000008240" description="Leu-enkephalin">
    <location>
        <begin position="166"/>
        <end position="170"/>
    </location>
</feature>
<feature type="propeptide" id="PRO_0000008241">
    <location>
        <begin position="173"/>
        <end position="187" status="greater than"/>
    </location>
</feature>
<feature type="region of interest" description="Disordered" evidence="4">
    <location>
        <begin position="81"/>
        <end position="132"/>
    </location>
</feature>
<feature type="compositionally biased region" description="Low complexity" evidence="4">
    <location>
        <begin position="88"/>
        <end position="99"/>
    </location>
</feature>
<feature type="compositionally biased region" description="Basic and acidic residues" evidence="4">
    <location>
        <begin position="111"/>
        <end position="120"/>
    </location>
</feature>
<feature type="site" description="Cleavage; by CTSL" evidence="2">
    <location>
        <begin position="49"/>
        <end position="50"/>
    </location>
</feature>
<feature type="site" description="Cleavage; by CTSL" evidence="2">
    <location>
        <begin position="50"/>
        <end position="51"/>
    </location>
</feature>
<feature type="site" description="Cleavage; by CTSL" evidence="2">
    <location>
        <begin position="70"/>
        <end position="71"/>
    </location>
</feature>
<feature type="site" description="Cleavage; by CTSL" evidence="2">
    <location>
        <begin position="150"/>
        <end position="151"/>
    </location>
</feature>
<feature type="site" description="Cleavage; by CTSL" evidence="2">
    <location>
        <begin position="151"/>
        <end position="152"/>
    </location>
</feature>
<feature type="site" description="Cleavage; by CTSL" evidence="2">
    <location>
        <begin position="154"/>
        <end position="155"/>
    </location>
</feature>
<feature type="modified residue" description="Phosphoserine" evidence="3">
    <location>
        <position position="187"/>
    </location>
</feature>
<feature type="non-terminal residue">
    <location>
        <position position="1"/>
    </location>
</feature>
<feature type="non-terminal residue">
    <location>
        <position position="187"/>
    </location>
</feature>
<reference key="1">
    <citation type="journal article" date="1996" name="Neurochem. Int.">
        <title>Cat proenkephalin-A does not contain the opioid octapeptide.</title>
        <authorList>
            <person name="Chaminade M."/>
            <person name="Chelot E."/>
            <person name="de Carvalho L."/>
            <person name="Bochet P."/>
            <person name="Rossier J."/>
        </authorList>
    </citation>
    <scope>NUCLEOTIDE SEQUENCE [MRNA]</scope>
    <source>
        <tissue>Adrenal medulla</tissue>
    </source>
</reference>
<comment type="function">
    <molecule>Met-enkephalin</molecule>
    <text evidence="1">Neuropeptide that competes with and mimic the effects of opiate drugs. They play a role in a number of physiologic functions, including pain perception and responses to stress.</text>
</comment>
<comment type="function">
    <molecule>Leu-enkephalin</molecule>
    <text evidence="1">Neuropeptide that competes with and mimic the effects of opiate drugs. They play a role in a number of physiologic functions, including pain perception and responses to stress.</text>
</comment>
<comment type="subcellular location">
    <subcellularLocation>
        <location evidence="2">Cytoplasmic vesicle</location>
        <location evidence="2">Secretory vesicle</location>
        <location evidence="2">Chromaffin granule lumen</location>
    </subcellularLocation>
    <subcellularLocation>
        <location evidence="2">Secreted</location>
    </subcellularLocation>
</comment>
<comment type="PTM">
    <molecule>Met-enkephalin</molecule>
    <text evidence="1">Processed and degraded by ACE.</text>
</comment>
<comment type="PTM">
    <molecule>Leu-enkephalin</molecule>
    <text evidence="1">Processed and degraded by ACE.</text>
</comment>
<comment type="PTM">
    <text evidence="1">The N-terminal domain contains 6 conserved cysteines thought to be involved in disulfide bonding and/or processing.</text>
</comment>
<comment type="PTM">
    <text evidence="2">Proenkephalin-A is cleaved by CTSL to generate Met-enkephalin.</text>
</comment>
<comment type="similarity">
    <text evidence="5">Belongs to the opioid neuropeptide precursor family.</text>
</comment>
<sequence length="187" mass="21267">WETCKEFLKLSQLEIPQDGTSALRESSPEESHALRKKYGGFMKRYGGFMKKMDELYPQEPEEEAPAEILAKRYGGFMKKDAEEEEDALASSSDLLKELLGPGETETAAAPRGRDDEDVSKSHGGFMRALKGSPQLAQEAKMLQKRYGGFMRRVGRPEWWMDYQKRYGGFLKRFADSLPSDEEGESYS</sequence>
<name>PENK_FELCA</name>
<organism>
    <name type="scientific">Felis catus</name>
    <name type="common">Cat</name>
    <name type="synonym">Felis silvestris catus</name>
    <dbReference type="NCBI Taxonomy" id="9685"/>
    <lineage>
        <taxon>Eukaryota</taxon>
        <taxon>Metazoa</taxon>
        <taxon>Chordata</taxon>
        <taxon>Craniata</taxon>
        <taxon>Vertebrata</taxon>
        <taxon>Euteleostomi</taxon>
        <taxon>Mammalia</taxon>
        <taxon>Eutheria</taxon>
        <taxon>Laurasiatheria</taxon>
        <taxon>Carnivora</taxon>
        <taxon>Feliformia</taxon>
        <taxon>Felidae</taxon>
        <taxon>Felinae</taxon>
        <taxon>Felis</taxon>
    </lineage>
</organism>
<evidence type="ECO:0000250" key="1">
    <source>
        <dbReference type="UniProtKB" id="P01210"/>
    </source>
</evidence>
<evidence type="ECO:0000250" key="2">
    <source>
        <dbReference type="UniProtKB" id="P01211"/>
    </source>
</evidence>
<evidence type="ECO:0000250" key="3">
    <source>
        <dbReference type="UniProtKB" id="P04094"/>
    </source>
</evidence>
<evidence type="ECO:0000256" key="4">
    <source>
        <dbReference type="SAM" id="MobiDB-lite"/>
    </source>
</evidence>
<evidence type="ECO:0000305" key="5"/>
<dbReference type="EMBL" id="U24247">
    <property type="protein sequence ID" value="AAC48512.1"/>
    <property type="molecule type" value="mRNA"/>
</dbReference>
<dbReference type="SMR" id="Q28409"/>
<dbReference type="STRING" id="9685.ENSFCAP00000058418"/>
<dbReference type="PaxDb" id="9685-ENSFCAP00000016633"/>
<dbReference type="eggNOG" id="ENOG502QWWK">
    <property type="taxonomic scope" value="Eukaryota"/>
</dbReference>
<dbReference type="InParanoid" id="Q28409"/>
<dbReference type="Proteomes" id="UP000011712">
    <property type="component" value="Unplaced"/>
</dbReference>
<dbReference type="GO" id="GO:0043679">
    <property type="term" value="C:axon terminus"/>
    <property type="evidence" value="ECO:0000318"/>
    <property type="project" value="GO_Central"/>
</dbReference>
<dbReference type="GO" id="GO:0034466">
    <property type="term" value="C:chromaffin granule lumen"/>
    <property type="evidence" value="ECO:0007669"/>
    <property type="project" value="UniProtKB-SubCell"/>
</dbReference>
<dbReference type="GO" id="GO:0030425">
    <property type="term" value="C:dendrite"/>
    <property type="evidence" value="ECO:0000318"/>
    <property type="project" value="GO_Central"/>
</dbReference>
<dbReference type="GO" id="GO:0005576">
    <property type="term" value="C:extracellular region"/>
    <property type="evidence" value="ECO:0007669"/>
    <property type="project" value="UniProtKB-SubCell"/>
</dbReference>
<dbReference type="GO" id="GO:0043025">
    <property type="term" value="C:neuronal cell body"/>
    <property type="evidence" value="ECO:0000318"/>
    <property type="project" value="GO_Central"/>
</dbReference>
<dbReference type="GO" id="GO:0005886">
    <property type="term" value="C:plasma membrane"/>
    <property type="evidence" value="ECO:0000318"/>
    <property type="project" value="GO_Central"/>
</dbReference>
<dbReference type="GO" id="GO:0001515">
    <property type="term" value="F:opioid peptide activity"/>
    <property type="evidence" value="ECO:0007669"/>
    <property type="project" value="UniProtKB-KW"/>
</dbReference>
<dbReference type="GO" id="GO:0007268">
    <property type="term" value="P:chemical synaptic transmission"/>
    <property type="evidence" value="ECO:0000318"/>
    <property type="project" value="GO_Central"/>
</dbReference>
<dbReference type="GO" id="GO:0007218">
    <property type="term" value="P:neuropeptide signaling pathway"/>
    <property type="evidence" value="ECO:0000318"/>
    <property type="project" value="GO_Central"/>
</dbReference>
<dbReference type="GO" id="GO:0007600">
    <property type="term" value="P:sensory perception"/>
    <property type="evidence" value="ECO:0000318"/>
    <property type="project" value="GO_Central"/>
</dbReference>
<dbReference type="InterPro" id="IPR006024">
    <property type="entry name" value="Opioid_neupept"/>
</dbReference>
<dbReference type="InterPro" id="IPR000703">
    <property type="entry name" value="Proenkphlin_A"/>
</dbReference>
<dbReference type="PANTHER" id="PTHR11438">
    <property type="entry name" value="PROENKEPHALIN"/>
    <property type="match status" value="1"/>
</dbReference>
<dbReference type="PANTHER" id="PTHR11438:SF3">
    <property type="entry name" value="PROENKEPHALIN-A"/>
    <property type="match status" value="1"/>
</dbReference>
<dbReference type="PRINTS" id="PR01029">
    <property type="entry name" value="PENKAPRCRSR"/>
</dbReference>
<keyword id="KW-0165">Cleavage on pair of basic residues</keyword>
<keyword id="KW-0968">Cytoplasmic vesicle</keyword>
<keyword id="KW-1015">Disulfide bond</keyword>
<keyword id="KW-0257">Endorphin</keyword>
<keyword id="KW-0527">Neuropeptide</keyword>
<keyword id="KW-0555">Opioid peptide</keyword>
<keyword id="KW-0597">Phosphoprotein</keyword>
<keyword id="KW-1185">Reference proteome</keyword>
<keyword id="KW-0964">Secreted</keyword>
<accession>Q28409</accession>
<gene>
    <name type="primary">PENK</name>
</gene>
<proteinExistence type="evidence at transcript level"/>